<dbReference type="EC" id="2.7.11.1"/>
<dbReference type="EMBL" id="U58512">
    <property type="protein sequence ID" value="AAC53132.1"/>
    <property type="molecule type" value="mRNA"/>
</dbReference>
<dbReference type="EMBL" id="AK050269">
    <property type="protein sequence ID" value="BAC34154.1"/>
    <property type="status" value="ALT_INIT"/>
    <property type="molecule type" value="mRNA"/>
</dbReference>
<dbReference type="EMBL" id="AK085974">
    <property type="protein sequence ID" value="BAC39581.1"/>
    <property type="molecule type" value="mRNA"/>
</dbReference>
<dbReference type="EMBL" id="BC057154">
    <property type="protein sequence ID" value="AAH57154.1"/>
    <property type="status" value="ALT_SEQ"/>
    <property type="molecule type" value="mRNA"/>
</dbReference>
<dbReference type="CCDS" id="CCDS29053.2">
    <molecule id="P70335-1"/>
</dbReference>
<dbReference type="PIR" id="S74244">
    <property type="entry name" value="S74244"/>
</dbReference>
<dbReference type="RefSeq" id="NP_033097.1">
    <molecule id="P70335-1"/>
    <property type="nucleotide sequence ID" value="NM_009071.2"/>
</dbReference>
<dbReference type="RefSeq" id="XP_006525788.1">
    <molecule id="P70335-2"/>
    <property type="nucleotide sequence ID" value="XM_006525725.2"/>
</dbReference>
<dbReference type="SMR" id="P70335"/>
<dbReference type="BioGRID" id="202950">
    <property type="interactions" value="45"/>
</dbReference>
<dbReference type="CORUM" id="P70335"/>
<dbReference type="DIP" id="DIP-35521N"/>
<dbReference type="FunCoup" id="P70335">
    <property type="interactions" value="3131"/>
</dbReference>
<dbReference type="IntAct" id="P70335">
    <property type="interactions" value="29"/>
</dbReference>
<dbReference type="MINT" id="P70335"/>
<dbReference type="STRING" id="10090.ENSMUSP00000069549"/>
<dbReference type="GlyGen" id="P70335">
    <property type="glycosylation" value="3 sites, 2 N-linked glycans (2 sites), 1 O-linked glycan (1 site)"/>
</dbReference>
<dbReference type="iPTMnet" id="P70335"/>
<dbReference type="PhosphoSitePlus" id="P70335"/>
<dbReference type="jPOST" id="P70335"/>
<dbReference type="PaxDb" id="10090-ENSMUSP00000069549"/>
<dbReference type="PeptideAtlas" id="P70335"/>
<dbReference type="ProteomicsDB" id="300565">
    <molecule id="P70335-1"/>
</dbReference>
<dbReference type="ProteomicsDB" id="300566">
    <molecule id="P70335-2"/>
</dbReference>
<dbReference type="Pumba" id="P70335"/>
<dbReference type="Antibodypedia" id="1128">
    <property type="antibodies" value="691 antibodies from 48 providers"/>
</dbReference>
<dbReference type="DNASU" id="19877"/>
<dbReference type="Ensembl" id="ENSMUST00000067947.7">
    <molecule id="P70335-1"/>
    <property type="protein sequence ID" value="ENSMUSP00000069549.6"/>
    <property type="gene ID" value="ENSMUSG00000024290.10"/>
</dbReference>
<dbReference type="GeneID" id="19877"/>
<dbReference type="KEGG" id="mmu:19877"/>
<dbReference type="UCSC" id="uc008eaq.1">
    <molecule id="P70335-1"/>
    <property type="organism name" value="mouse"/>
</dbReference>
<dbReference type="AGR" id="MGI:107927"/>
<dbReference type="CTD" id="6093"/>
<dbReference type="MGI" id="MGI:107927">
    <property type="gene designation" value="Rock1"/>
</dbReference>
<dbReference type="VEuPathDB" id="HostDB:ENSMUSG00000024290"/>
<dbReference type="eggNOG" id="KOG0612">
    <property type="taxonomic scope" value="Eukaryota"/>
</dbReference>
<dbReference type="GeneTree" id="ENSGT01030000234517"/>
<dbReference type="HOGENOM" id="CLU_000288_140_0_1"/>
<dbReference type="InParanoid" id="P70335"/>
<dbReference type="OMA" id="XETLATQ"/>
<dbReference type="OrthoDB" id="3638488at2759"/>
<dbReference type="PhylomeDB" id="P70335"/>
<dbReference type="TreeFam" id="TF313551"/>
<dbReference type="Reactome" id="R-MMU-111465">
    <property type="pathway name" value="Apoptotic cleavage of cellular proteins"/>
</dbReference>
<dbReference type="Reactome" id="R-MMU-3928662">
    <property type="pathway name" value="EPHB-mediated forward signaling"/>
</dbReference>
<dbReference type="Reactome" id="R-MMU-416482">
    <property type="pathway name" value="G alpha (12/13) signalling events"/>
</dbReference>
<dbReference type="Reactome" id="R-MMU-416572">
    <property type="pathway name" value="Sema4D induced cell migration and growth-cone collapse"/>
</dbReference>
<dbReference type="Reactome" id="R-MMU-4420097">
    <property type="pathway name" value="VEGFA-VEGFR2 Pathway"/>
</dbReference>
<dbReference type="Reactome" id="R-MMU-5627117">
    <property type="pathway name" value="RHO GTPases Activate ROCKs"/>
</dbReference>
<dbReference type="Reactome" id="R-MMU-6798695">
    <property type="pathway name" value="Neutrophil degranulation"/>
</dbReference>
<dbReference type="Reactome" id="R-MMU-8980692">
    <property type="pathway name" value="RHOA GTPase cycle"/>
</dbReference>
<dbReference type="Reactome" id="R-MMU-9013026">
    <property type="pathway name" value="RHOB GTPase cycle"/>
</dbReference>
<dbReference type="Reactome" id="R-MMU-9013106">
    <property type="pathway name" value="RHOC GTPase cycle"/>
</dbReference>
<dbReference type="Reactome" id="R-MMU-9013407">
    <property type="pathway name" value="RHOH GTPase cycle"/>
</dbReference>
<dbReference type="Reactome" id="R-MMU-9013422">
    <property type="pathway name" value="RHOBTB1 GTPase cycle"/>
</dbReference>
<dbReference type="Reactome" id="R-MMU-9696264">
    <property type="pathway name" value="RND3 GTPase cycle"/>
</dbReference>
<dbReference type="BioGRID-ORCS" id="19877">
    <property type="hits" value="7 hits in 78 CRISPR screens"/>
</dbReference>
<dbReference type="ChiTaRS" id="Rock1">
    <property type="organism name" value="mouse"/>
</dbReference>
<dbReference type="PRO" id="PR:P70335"/>
<dbReference type="Proteomes" id="UP000000589">
    <property type="component" value="Chromosome 18"/>
</dbReference>
<dbReference type="RNAct" id="P70335">
    <property type="molecule type" value="protein"/>
</dbReference>
<dbReference type="Bgee" id="ENSMUSG00000024290">
    <property type="expression patterns" value="Expressed in aorta tunica media and 257 other cell types or tissues"/>
</dbReference>
<dbReference type="ExpressionAtlas" id="P70335">
    <property type="expression patterns" value="baseline and differential"/>
</dbReference>
<dbReference type="GO" id="GO:0032059">
    <property type="term" value="C:bleb"/>
    <property type="evidence" value="ECO:0007669"/>
    <property type="project" value="UniProtKB-SubCell"/>
</dbReference>
<dbReference type="GO" id="GO:0005814">
    <property type="term" value="C:centriole"/>
    <property type="evidence" value="ECO:0007669"/>
    <property type="project" value="UniProtKB-SubCell"/>
</dbReference>
<dbReference type="GO" id="GO:0010494">
    <property type="term" value="C:cytoplasmic stress granule"/>
    <property type="evidence" value="ECO:0000314"/>
    <property type="project" value="ARUK-UCL"/>
</dbReference>
<dbReference type="GO" id="GO:0005856">
    <property type="term" value="C:cytoskeleton"/>
    <property type="evidence" value="ECO:0000314"/>
    <property type="project" value="UniProtKB"/>
</dbReference>
<dbReference type="GO" id="GO:0000139">
    <property type="term" value="C:Golgi membrane"/>
    <property type="evidence" value="ECO:0007669"/>
    <property type="project" value="UniProtKB-SubCell"/>
</dbReference>
<dbReference type="GO" id="GO:0030027">
    <property type="term" value="C:lamellipodium"/>
    <property type="evidence" value="ECO:0000314"/>
    <property type="project" value="UniProtKB"/>
</dbReference>
<dbReference type="GO" id="GO:0005886">
    <property type="term" value="C:plasma membrane"/>
    <property type="evidence" value="ECO:0000314"/>
    <property type="project" value="UniProtKB"/>
</dbReference>
<dbReference type="GO" id="GO:0001726">
    <property type="term" value="C:ruffle"/>
    <property type="evidence" value="ECO:0000314"/>
    <property type="project" value="UniProtKB"/>
</dbReference>
<dbReference type="GO" id="GO:0098685">
    <property type="term" value="C:Schaffer collateral - CA1 synapse"/>
    <property type="evidence" value="ECO:0000314"/>
    <property type="project" value="SynGO"/>
</dbReference>
<dbReference type="GO" id="GO:0005524">
    <property type="term" value="F:ATP binding"/>
    <property type="evidence" value="ECO:0007669"/>
    <property type="project" value="UniProtKB-KW"/>
</dbReference>
<dbReference type="GO" id="GO:0106310">
    <property type="term" value="F:protein serine kinase activity"/>
    <property type="evidence" value="ECO:0007669"/>
    <property type="project" value="RHEA"/>
</dbReference>
<dbReference type="GO" id="GO:0004674">
    <property type="term" value="F:protein serine/threonine kinase activity"/>
    <property type="evidence" value="ECO:0000250"/>
    <property type="project" value="UniProtKB"/>
</dbReference>
<dbReference type="GO" id="GO:0072518">
    <property type="term" value="F:Rho-dependent protein serine/threonine kinase activity"/>
    <property type="evidence" value="ECO:0007669"/>
    <property type="project" value="Ensembl"/>
</dbReference>
<dbReference type="GO" id="GO:0031267">
    <property type="term" value="F:small GTPase binding"/>
    <property type="evidence" value="ECO:0007669"/>
    <property type="project" value="InterPro"/>
</dbReference>
<dbReference type="GO" id="GO:0008270">
    <property type="term" value="F:zinc ion binding"/>
    <property type="evidence" value="ECO:0007669"/>
    <property type="project" value="UniProtKB-KW"/>
</dbReference>
<dbReference type="GO" id="GO:0030036">
    <property type="term" value="P:actin cytoskeleton organization"/>
    <property type="evidence" value="ECO:0000316"/>
    <property type="project" value="BHF-UCL"/>
</dbReference>
<dbReference type="GO" id="GO:0003383">
    <property type="term" value="P:apical constriction"/>
    <property type="evidence" value="ECO:0000316"/>
    <property type="project" value="MGI"/>
</dbReference>
<dbReference type="GO" id="GO:0032060">
    <property type="term" value="P:bleb assembly"/>
    <property type="evidence" value="ECO:0000315"/>
    <property type="project" value="MGI"/>
</dbReference>
<dbReference type="GO" id="GO:0097746">
    <property type="term" value="P:blood vessel diameter maintenance"/>
    <property type="evidence" value="ECO:0000315"/>
    <property type="project" value="ARUK-UCL"/>
</dbReference>
<dbReference type="GO" id="GO:0001837">
    <property type="term" value="P:epithelial to mesenchymal transition"/>
    <property type="evidence" value="ECO:0000316"/>
    <property type="project" value="BHF-UCL"/>
</dbReference>
<dbReference type="GO" id="GO:0050901">
    <property type="term" value="P:leukocyte tethering or rolling"/>
    <property type="evidence" value="ECO:0007669"/>
    <property type="project" value="Ensembl"/>
</dbReference>
<dbReference type="GO" id="GO:0022614">
    <property type="term" value="P:membrane to membrane docking"/>
    <property type="evidence" value="ECO:0007669"/>
    <property type="project" value="Ensembl"/>
</dbReference>
<dbReference type="GO" id="GO:0097049">
    <property type="term" value="P:motor neuron apoptotic process"/>
    <property type="evidence" value="ECO:0000315"/>
    <property type="project" value="MGI"/>
</dbReference>
<dbReference type="GO" id="GO:0061157">
    <property type="term" value="P:mRNA destabilization"/>
    <property type="evidence" value="ECO:0000315"/>
    <property type="project" value="ARUK-UCL"/>
</dbReference>
<dbReference type="GO" id="GO:0051451">
    <property type="term" value="P:myoblast migration"/>
    <property type="evidence" value="ECO:0000315"/>
    <property type="project" value="UniProtKB"/>
</dbReference>
<dbReference type="GO" id="GO:1902430">
    <property type="term" value="P:negative regulation of amyloid-beta formation"/>
    <property type="evidence" value="ECO:0007669"/>
    <property type="project" value="Ensembl"/>
</dbReference>
<dbReference type="GO" id="GO:0016525">
    <property type="term" value="P:negative regulation of angiogenesis"/>
    <property type="evidence" value="ECO:0007669"/>
    <property type="project" value="Ensembl"/>
</dbReference>
<dbReference type="GO" id="GO:1903347">
    <property type="term" value="P:negative regulation of bicellular tight junction assembly"/>
    <property type="evidence" value="ECO:0007669"/>
    <property type="project" value="Ensembl"/>
</dbReference>
<dbReference type="GO" id="GO:2000672">
    <property type="term" value="P:negative regulation of motor neuron apoptotic process"/>
    <property type="evidence" value="ECO:0000315"/>
    <property type="project" value="MGI"/>
</dbReference>
<dbReference type="GO" id="GO:0140058">
    <property type="term" value="P:neuron projection arborization"/>
    <property type="evidence" value="ECO:0007669"/>
    <property type="project" value="Ensembl"/>
</dbReference>
<dbReference type="GO" id="GO:0090521">
    <property type="term" value="P:podocyte cell migration"/>
    <property type="evidence" value="ECO:0000315"/>
    <property type="project" value="UniProtKB"/>
</dbReference>
<dbReference type="GO" id="GO:1900223">
    <property type="term" value="P:positive regulation of amyloid-beta clearance"/>
    <property type="evidence" value="ECO:0007669"/>
    <property type="project" value="Ensembl"/>
</dbReference>
<dbReference type="GO" id="GO:0010508">
    <property type="term" value="P:positive regulation of autophagy"/>
    <property type="evidence" value="ECO:0007669"/>
    <property type="project" value="Ensembl"/>
</dbReference>
<dbReference type="GO" id="GO:0010613">
    <property type="term" value="P:positive regulation of cardiac muscle hypertrophy"/>
    <property type="evidence" value="ECO:0007669"/>
    <property type="project" value="Ensembl"/>
</dbReference>
<dbReference type="GO" id="GO:1905205">
    <property type="term" value="P:positive regulation of connective tissue replacement"/>
    <property type="evidence" value="ECO:0007669"/>
    <property type="project" value="Ensembl"/>
</dbReference>
<dbReference type="GO" id="GO:0051894">
    <property type="term" value="P:positive regulation of focal adhesion assembly"/>
    <property type="evidence" value="ECO:0000315"/>
    <property type="project" value="UniProtKB"/>
</dbReference>
<dbReference type="GO" id="GO:0010628">
    <property type="term" value="P:positive regulation of gene expression"/>
    <property type="evidence" value="ECO:0007669"/>
    <property type="project" value="Ensembl"/>
</dbReference>
<dbReference type="GO" id="GO:0043410">
    <property type="term" value="P:positive regulation of MAPK cascade"/>
    <property type="evidence" value="ECO:0007669"/>
    <property type="project" value="Ensembl"/>
</dbReference>
<dbReference type="GO" id="GO:0072659">
    <property type="term" value="P:protein localization to plasma membrane"/>
    <property type="evidence" value="ECO:0007669"/>
    <property type="project" value="Ensembl"/>
</dbReference>
<dbReference type="GO" id="GO:0032956">
    <property type="term" value="P:regulation of actin cytoskeleton organization"/>
    <property type="evidence" value="ECO:0000315"/>
    <property type="project" value="UniProtKB"/>
</dbReference>
<dbReference type="GO" id="GO:0032970">
    <property type="term" value="P:regulation of actin filament-based process"/>
    <property type="evidence" value="ECO:0000316"/>
    <property type="project" value="MGI"/>
</dbReference>
<dbReference type="GO" id="GO:0110061">
    <property type="term" value="P:regulation of angiotensin-activated signaling pathway"/>
    <property type="evidence" value="ECO:0007669"/>
    <property type="project" value="Ensembl"/>
</dbReference>
<dbReference type="GO" id="GO:0030334">
    <property type="term" value="P:regulation of cell migration"/>
    <property type="evidence" value="ECO:0000250"/>
    <property type="project" value="UniProtKB"/>
</dbReference>
<dbReference type="GO" id="GO:1903140">
    <property type="term" value="P:regulation of establishment of endothelial barrier"/>
    <property type="evidence" value="ECO:0007669"/>
    <property type="project" value="Ensembl"/>
</dbReference>
<dbReference type="GO" id="GO:0045616">
    <property type="term" value="P:regulation of keratinocyte differentiation"/>
    <property type="evidence" value="ECO:0007669"/>
    <property type="project" value="Ensembl"/>
</dbReference>
<dbReference type="GO" id="GO:0070507">
    <property type="term" value="P:regulation of microtubule cytoskeleton organization"/>
    <property type="evidence" value="ECO:0000250"/>
    <property type="project" value="UniProtKB"/>
</dbReference>
<dbReference type="GO" id="GO:0045664">
    <property type="term" value="P:regulation of neuron differentiation"/>
    <property type="evidence" value="ECO:0007669"/>
    <property type="project" value="Ensembl"/>
</dbReference>
<dbReference type="GO" id="GO:0090128">
    <property type="term" value="P:regulation of synapse maturation"/>
    <property type="evidence" value="ECO:0000314"/>
    <property type="project" value="SynGO"/>
</dbReference>
<dbReference type="GO" id="GO:1900242">
    <property type="term" value="P:regulation of synaptic vesicle endocytosis"/>
    <property type="evidence" value="ECO:0007669"/>
    <property type="project" value="Ensembl"/>
</dbReference>
<dbReference type="GO" id="GO:1990776">
    <property type="term" value="P:response to angiotensin"/>
    <property type="evidence" value="ECO:0000316"/>
    <property type="project" value="ARUK-UCL"/>
</dbReference>
<dbReference type="GO" id="GO:0071559">
    <property type="term" value="P:response to transforming growth factor beta"/>
    <property type="evidence" value="ECO:0000316"/>
    <property type="project" value="ARUK-UCL"/>
</dbReference>
<dbReference type="GO" id="GO:0007266">
    <property type="term" value="P:Rho protein signal transduction"/>
    <property type="evidence" value="ECO:0000266"/>
    <property type="project" value="MGI"/>
</dbReference>
<dbReference type="CDD" id="cd20874">
    <property type="entry name" value="C1_ROCK1"/>
    <property type="match status" value="1"/>
</dbReference>
<dbReference type="CDD" id="cd11639">
    <property type="entry name" value="HR1_ROCK1"/>
    <property type="match status" value="1"/>
</dbReference>
<dbReference type="CDD" id="cd01242">
    <property type="entry name" value="PH_ROCK"/>
    <property type="match status" value="1"/>
</dbReference>
<dbReference type="CDD" id="cd22250">
    <property type="entry name" value="ROCK_SBD"/>
    <property type="match status" value="1"/>
</dbReference>
<dbReference type="CDD" id="cd05622">
    <property type="entry name" value="STKc_ROCK1"/>
    <property type="match status" value="1"/>
</dbReference>
<dbReference type="FunFam" id="1.10.510.10:FF:000047">
    <property type="entry name" value="Rho-associated protein kinase 1"/>
    <property type="match status" value="1"/>
</dbReference>
<dbReference type="FunFam" id="1.20.5.340:FF:000023">
    <property type="entry name" value="Rho-associated protein kinase 1"/>
    <property type="match status" value="1"/>
</dbReference>
<dbReference type="FunFam" id="3.30.60.20:FF:000036">
    <property type="entry name" value="Rho-associated protein kinase 1"/>
    <property type="match status" value="1"/>
</dbReference>
<dbReference type="FunFam" id="2.30.29.30:FF:000033">
    <property type="entry name" value="Rho-associated protein kinase 2"/>
    <property type="match status" value="1"/>
</dbReference>
<dbReference type="FunFam" id="3.30.200.20:FF:000072">
    <property type="entry name" value="Rho-associated protein kinase 2"/>
    <property type="match status" value="1"/>
</dbReference>
<dbReference type="FunFam" id="1.20.5.730:FF:000001">
    <property type="entry name" value="rho-associated protein kinase 2"/>
    <property type="match status" value="1"/>
</dbReference>
<dbReference type="FunFam" id="3.30.200.20:FF:001759">
    <property type="entry name" value="Rho-associated, coiled-coil-containing protein kinase 2b"/>
    <property type="match status" value="1"/>
</dbReference>
<dbReference type="Gene3D" id="1.20.5.340">
    <property type="match status" value="1"/>
</dbReference>
<dbReference type="Gene3D" id="3.30.60.20">
    <property type="match status" value="1"/>
</dbReference>
<dbReference type="Gene3D" id="3.30.200.20">
    <property type="entry name" value="Phosphorylase Kinase, domain 1"/>
    <property type="match status" value="1"/>
</dbReference>
<dbReference type="Gene3D" id="2.30.29.30">
    <property type="entry name" value="Pleckstrin-homology domain (PH domain)/Phosphotyrosine-binding domain (PTB)"/>
    <property type="match status" value="1"/>
</dbReference>
<dbReference type="Gene3D" id="1.20.5.730">
    <property type="entry name" value="Single helix bin"/>
    <property type="match status" value="1"/>
</dbReference>
<dbReference type="Gene3D" id="1.10.510.10">
    <property type="entry name" value="Transferase(Phosphotransferase) domain 1"/>
    <property type="match status" value="1"/>
</dbReference>
<dbReference type="InterPro" id="IPR000961">
    <property type="entry name" value="AGC-kinase_C"/>
</dbReference>
<dbReference type="InterPro" id="IPR046349">
    <property type="entry name" value="C1-like_sf"/>
</dbReference>
<dbReference type="InterPro" id="IPR011072">
    <property type="entry name" value="HR1_rho-bd"/>
</dbReference>
<dbReference type="InterPro" id="IPR011009">
    <property type="entry name" value="Kinase-like_dom_sf"/>
</dbReference>
<dbReference type="InterPro" id="IPR002219">
    <property type="entry name" value="PE/DAG-bd"/>
</dbReference>
<dbReference type="InterPro" id="IPR011993">
    <property type="entry name" value="PH-like_dom_sf"/>
</dbReference>
<dbReference type="InterPro" id="IPR001849">
    <property type="entry name" value="PH_domain"/>
</dbReference>
<dbReference type="InterPro" id="IPR000719">
    <property type="entry name" value="Prot_kinase_dom"/>
</dbReference>
<dbReference type="InterPro" id="IPR017441">
    <property type="entry name" value="Protein_kinase_ATP_BS"/>
</dbReference>
<dbReference type="InterPro" id="IPR050839">
    <property type="entry name" value="Rho-assoc_Ser/Thr_Kinase"/>
</dbReference>
<dbReference type="InterPro" id="IPR020684">
    <property type="entry name" value="ROCK1/ROCK2"/>
</dbReference>
<dbReference type="InterPro" id="IPR037310">
    <property type="entry name" value="ROCK1_HR1"/>
</dbReference>
<dbReference type="InterPro" id="IPR015008">
    <property type="entry name" value="ROCK_Rho-bd_dom"/>
</dbReference>
<dbReference type="InterPro" id="IPR008271">
    <property type="entry name" value="Ser/Thr_kinase_AS"/>
</dbReference>
<dbReference type="PANTHER" id="PTHR22988">
    <property type="entry name" value="MYOTONIC DYSTROPHY S/T KINASE-RELATED"/>
    <property type="match status" value="1"/>
</dbReference>
<dbReference type="PANTHER" id="PTHR22988:SF33">
    <property type="entry name" value="RHO-ASSOCIATED PROTEIN KINASE 1"/>
    <property type="match status" value="1"/>
</dbReference>
<dbReference type="Pfam" id="PF25346">
    <property type="entry name" value="PH_MRCK"/>
    <property type="match status" value="1"/>
</dbReference>
<dbReference type="Pfam" id="PF00069">
    <property type="entry name" value="Pkinase"/>
    <property type="match status" value="1"/>
</dbReference>
<dbReference type="Pfam" id="PF08912">
    <property type="entry name" value="Rho_Binding"/>
    <property type="match status" value="1"/>
</dbReference>
<dbReference type="PIRSF" id="PIRSF037568">
    <property type="entry name" value="Rho_kinase"/>
    <property type="match status" value="1"/>
</dbReference>
<dbReference type="SMART" id="SM00109">
    <property type="entry name" value="C1"/>
    <property type="match status" value="1"/>
</dbReference>
<dbReference type="SMART" id="SM00233">
    <property type="entry name" value="PH"/>
    <property type="match status" value="1"/>
</dbReference>
<dbReference type="SMART" id="SM00133">
    <property type="entry name" value="S_TK_X"/>
    <property type="match status" value="1"/>
</dbReference>
<dbReference type="SMART" id="SM00220">
    <property type="entry name" value="S_TKc"/>
    <property type="match status" value="1"/>
</dbReference>
<dbReference type="SUPFAM" id="SSF57889">
    <property type="entry name" value="Cysteine-rich domain"/>
    <property type="match status" value="1"/>
</dbReference>
<dbReference type="SUPFAM" id="SSF103652">
    <property type="entry name" value="G protein-binding domain"/>
    <property type="match status" value="1"/>
</dbReference>
<dbReference type="SUPFAM" id="SSF90257">
    <property type="entry name" value="Myosin rod fragments"/>
    <property type="match status" value="1"/>
</dbReference>
<dbReference type="SUPFAM" id="SSF50729">
    <property type="entry name" value="PH domain-like"/>
    <property type="match status" value="1"/>
</dbReference>
<dbReference type="SUPFAM" id="SSF56112">
    <property type="entry name" value="Protein kinase-like (PK-like)"/>
    <property type="match status" value="1"/>
</dbReference>
<dbReference type="PROSITE" id="PS51285">
    <property type="entry name" value="AGC_KINASE_CTER"/>
    <property type="match status" value="1"/>
</dbReference>
<dbReference type="PROSITE" id="PS50003">
    <property type="entry name" value="PH_DOMAIN"/>
    <property type="match status" value="1"/>
</dbReference>
<dbReference type="PROSITE" id="PS00107">
    <property type="entry name" value="PROTEIN_KINASE_ATP"/>
    <property type="match status" value="1"/>
</dbReference>
<dbReference type="PROSITE" id="PS50011">
    <property type="entry name" value="PROTEIN_KINASE_DOM"/>
    <property type="match status" value="1"/>
</dbReference>
<dbReference type="PROSITE" id="PS00108">
    <property type="entry name" value="PROTEIN_KINASE_ST"/>
    <property type="match status" value="1"/>
</dbReference>
<dbReference type="PROSITE" id="PS51860">
    <property type="entry name" value="REM_1"/>
    <property type="match status" value="1"/>
</dbReference>
<dbReference type="PROSITE" id="PS51859">
    <property type="entry name" value="RHO_BD"/>
    <property type="match status" value="1"/>
</dbReference>
<dbReference type="PROSITE" id="PS50081">
    <property type="entry name" value="ZF_DAG_PE_2"/>
    <property type="match status" value="1"/>
</dbReference>
<comment type="function">
    <text evidence="2 3 13 16 17 18 19 21">Protein kinase which is a key regulator of the actin cytoskeleton and cell polarity (PubMed:19036714, PubMed:19181962). Involved in regulation of smooth muscle contraction, actin cytoskeleton organization, stress fiber and focal adhesion formation, neurite retraction, cell adhesion and motility via phosphorylation of DAPK3, GFAP, LIMK1, LIMK2, MYL9/MLC2, TPPP, PFN1 and PPP1R12A (PubMed:19036714, PubMed:19181962). Phosphorylates FHOD1 and acts synergistically with it to promote SRC-dependent non-apoptotic plasma membrane blebbing. Phosphorylates JIP3 and regulates the recruitment of JNK to JIP3 upon UVB-induced stress (By similarity). Acts as a suppressor of inflammatory cell migration by regulating PTEN phosphorylation and stability (PubMed:20008297). Acts as a negative regulator of VEGF-induced angiogenic endothelial cell activation. Required for centrosome positioning and centrosome-dependent exit from mitosis (By similarity). Plays a role in terminal erythroid differentiation (By similarity). Inhibits podocyte motility via regulation of actin cytoskeletal dynamics and phosphorylation of CFL1 (PubMed:30115939). Promotes keratinocyte terminal differentiation (By similarity). Involved in osteoblast compaction through the fibronectin fibrillogenesis cell-mediated matrix assembly process, essential for osteoblast mineralization (PubMed:21768292). May regulate closure of the eyelids and ventral body wall by inducing the assembly of actomyosin bundles (PubMed:15753128).</text>
</comment>
<comment type="catalytic activity">
    <reaction evidence="2">
        <text>L-seryl-[protein] + ATP = O-phospho-L-seryl-[protein] + ADP + H(+)</text>
        <dbReference type="Rhea" id="RHEA:17989"/>
        <dbReference type="Rhea" id="RHEA-COMP:9863"/>
        <dbReference type="Rhea" id="RHEA-COMP:11604"/>
        <dbReference type="ChEBI" id="CHEBI:15378"/>
        <dbReference type="ChEBI" id="CHEBI:29999"/>
        <dbReference type="ChEBI" id="CHEBI:30616"/>
        <dbReference type="ChEBI" id="CHEBI:83421"/>
        <dbReference type="ChEBI" id="CHEBI:456216"/>
        <dbReference type="EC" id="2.7.11.1"/>
    </reaction>
    <physiologicalReaction direction="left-to-right" evidence="2">
        <dbReference type="Rhea" id="RHEA:17990"/>
    </physiologicalReaction>
</comment>
<comment type="catalytic activity">
    <reaction evidence="2">
        <text>L-threonyl-[protein] + ATP = O-phospho-L-threonyl-[protein] + ADP + H(+)</text>
        <dbReference type="Rhea" id="RHEA:46608"/>
        <dbReference type="Rhea" id="RHEA-COMP:11060"/>
        <dbReference type="Rhea" id="RHEA-COMP:11605"/>
        <dbReference type="ChEBI" id="CHEBI:15378"/>
        <dbReference type="ChEBI" id="CHEBI:30013"/>
        <dbReference type="ChEBI" id="CHEBI:30616"/>
        <dbReference type="ChEBI" id="CHEBI:61977"/>
        <dbReference type="ChEBI" id="CHEBI:456216"/>
        <dbReference type="EC" id="2.7.11.1"/>
    </reaction>
    <physiologicalReaction direction="left-to-right" evidence="2">
        <dbReference type="Rhea" id="RHEA:46609"/>
    </physiologicalReaction>
</comment>
<comment type="cofactor">
    <cofactor evidence="1">
        <name>Mg(2+)</name>
        <dbReference type="ChEBI" id="CHEBI:18420"/>
    </cofactor>
</comment>
<comment type="activity regulation">
    <text evidence="1">Activated by RHOA binding. Inhibited by Y-27632 (By similarity).</text>
</comment>
<comment type="subunit">
    <text evidence="1 14 15 18 20">Homodimer (By similarity). Interacts with RHOA (activated by GTP), RHOB, RHOC, GEM, MYLC2B, RHOE, PPP1R12A, LIMK1, LIMK2, TSG101, CHORDC1, DAPK3, PFN1 and JIP3 (By similarity). Interacts with FHOD1 in a Src-dependent manner (By similarity). Interacts with PTEN. Interacts with ITGB1BP1 (via N-terminus and PTB domain). Interacts with SHROOM3 (PubMed:22493320).</text>
</comment>
<comment type="interaction">
    <interactant intactId="EBI-989293">
        <id>P70335</id>
    </interactant>
    <interactant intactId="EBI-6930266">
        <id>P61588</id>
        <label>Rnd3</label>
    </interactant>
    <organismsDiffer>false</organismsDiffer>
    <experiments>7</experiments>
</comment>
<comment type="subcellular location">
    <subcellularLocation>
        <location evidence="14">Cytoplasm</location>
    </subcellularLocation>
    <subcellularLocation>
        <location evidence="14">Cytoplasm</location>
        <location evidence="14">Cytoskeleton</location>
        <location evidence="14">Microtubule organizing center</location>
        <location evidence="14">Centrosome</location>
        <location evidence="14">Centriole</location>
    </subcellularLocation>
    <subcellularLocation>
        <location evidence="2">Golgi apparatus membrane</location>
        <topology evidence="2">Peripheral membrane protein</topology>
    </subcellularLocation>
    <subcellularLocation>
        <location evidence="2">Cell projection</location>
        <location evidence="2">Bleb</location>
    </subcellularLocation>
    <subcellularLocation>
        <location evidence="14">Cytoplasm</location>
        <location evidence="14">Cytoskeleton</location>
    </subcellularLocation>
    <subcellularLocation>
        <location evidence="14">Cell membrane</location>
    </subcellularLocation>
    <subcellularLocation>
        <location evidence="14">Cell projection</location>
        <location evidence="14">Lamellipodium</location>
    </subcellularLocation>
    <subcellularLocation>
        <location evidence="14">Cell projection</location>
        <location evidence="14">Ruffle</location>
    </subcellularLocation>
    <text evidence="2 14">A small proportion is associated with Golgi membranes (By similarity). Associated with the mother centriole and an intercentriolar linker (PubMed:16741948). Colocalizes with ITGB1BP1 and ITGB1 at the cell membrane predominantly in lamellipodia and membrane ruffles, but also in retraction fibers (PubMed:16741948). Localizes at the cell membrane in an ITGB1BP1-dependent manner (PubMed:16741948).</text>
</comment>
<comment type="alternative products">
    <event type="alternative splicing"/>
    <isoform>
        <id>P70335-1</id>
        <name>1</name>
        <sequence type="displayed"/>
    </isoform>
    <isoform>
        <id>P70335-2</id>
        <name>2</name>
        <sequence type="described" ref="VSP_010448"/>
    </isoform>
</comment>
<comment type="tissue specificity">
    <text evidence="22">Highly expressed in brain, heart, lung, liver, stomach, spleen, kidney, testis, muscle, embryo and placenta.</text>
</comment>
<comment type="domain">
    <text>The C-terminal auto-inhibitory domain interferes with kinase activity. RHOA binding leads to a conformation change and activation of the kinase. Truncated ROCK1 is constitutively activated.</text>
</comment>
<comment type="PTM">
    <text>Autophosphorylated on serine and threonine residues.</text>
</comment>
<comment type="PTM">
    <text evidence="1">Cleaved by caspase-3 during apoptosis. This leads to constitutive activation of the kinase and membrane blebbing (By similarity).</text>
</comment>
<comment type="disruption phenotype">
    <text evidence="13">Mice exhibit both EOB (eyes open at birth) and omphalocele phenotypes as a result of disorganization of actomyosin cables in the eyelid epithelium and defective actin assembly in the umbilical ring.</text>
</comment>
<comment type="miscellaneous">
    <molecule>Isoform 2</molecule>
    <text evidence="24">May be due to a competing donor splice site.</text>
</comment>
<comment type="similarity">
    <text evidence="24">Belongs to the protein kinase superfamily. AGC Ser/Thr protein kinase family.</text>
</comment>
<comment type="sequence caution" evidence="24">
    <conflict type="miscellaneous discrepancy">
        <sequence resource="EMBL-CDS" id="AAH57154"/>
    </conflict>
    <text>Contaminating sequence. Potential poly-A sequence.</text>
</comment>
<comment type="sequence caution" evidence="24">
    <conflict type="erroneous initiation">
        <sequence resource="EMBL-CDS" id="BAC34154"/>
    </conflict>
</comment>
<proteinExistence type="evidence at protein level"/>
<reference key="1">
    <citation type="journal article" date="1996" name="FEBS Lett.">
        <title>ROCK-I and ROCK-II, two isoforms of Rho-associated coiled-coil forming protein serine/threonine kinase in mice.</title>
        <authorList>
            <person name="Nakagawa O."/>
            <person name="Fujisawa K."/>
            <person name="Ishizaki T."/>
            <person name="Saito Y."/>
            <person name="Nakao K."/>
            <person name="Narumiya S."/>
        </authorList>
    </citation>
    <scope>NUCLEOTIDE SEQUENCE [MRNA] (ISOFORM 1)</scope>
    <scope>TISSUE SPECIFICITY</scope>
    <source>
        <tissue>Embryo</tissue>
        <tissue>Heart</tissue>
    </source>
</reference>
<reference key="2">
    <citation type="journal article" date="2004" name="Genome Res.">
        <title>The status, quality, and expansion of the NIH full-length cDNA project: the Mammalian Gene Collection (MGC).</title>
        <authorList>
            <consortium name="The MGC Project Team"/>
        </authorList>
    </citation>
    <scope>NUCLEOTIDE SEQUENCE [LARGE SCALE MRNA] OF 1-506 (ISOFORM 2)</scope>
    <source>
        <strain>FVB/N</strain>
        <tissue>Mammary gland</tissue>
    </source>
</reference>
<reference key="3">
    <citation type="journal article" date="2005" name="Science">
        <title>The transcriptional landscape of the mammalian genome.</title>
        <authorList>
            <person name="Carninci P."/>
            <person name="Kasukawa T."/>
            <person name="Katayama S."/>
            <person name="Gough J."/>
            <person name="Frith M.C."/>
            <person name="Maeda N."/>
            <person name="Oyama R."/>
            <person name="Ravasi T."/>
            <person name="Lenhard B."/>
            <person name="Wells C."/>
            <person name="Kodzius R."/>
            <person name="Shimokawa K."/>
            <person name="Bajic V.B."/>
            <person name="Brenner S.E."/>
            <person name="Batalov S."/>
            <person name="Forrest A.R."/>
            <person name="Zavolan M."/>
            <person name="Davis M.J."/>
            <person name="Wilming L.G."/>
            <person name="Aidinis V."/>
            <person name="Allen J.E."/>
            <person name="Ambesi-Impiombato A."/>
            <person name="Apweiler R."/>
            <person name="Aturaliya R.N."/>
            <person name="Bailey T.L."/>
            <person name="Bansal M."/>
            <person name="Baxter L."/>
            <person name="Beisel K.W."/>
            <person name="Bersano T."/>
            <person name="Bono H."/>
            <person name="Chalk A.M."/>
            <person name="Chiu K.P."/>
            <person name="Choudhary V."/>
            <person name="Christoffels A."/>
            <person name="Clutterbuck D.R."/>
            <person name="Crowe M.L."/>
            <person name="Dalla E."/>
            <person name="Dalrymple B.P."/>
            <person name="de Bono B."/>
            <person name="Della Gatta G."/>
            <person name="di Bernardo D."/>
            <person name="Down T."/>
            <person name="Engstrom P."/>
            <person name="Fagiolini M."/>
            <person name="Faulkner G."/>
            <person name="Fletcher C.F."/>
            <person name="Fukushima T."/>
            <person name="Furuno M."/>
            <person name="Futaki S."/>
            <person name="Gariboldi M."/>
            <person name="Georgii-Hemming P."/>
            <person name="Gingeras T.R."/>
            <person name="Gojobori T."/>
            <person name="Green R.E."/>
            <person name="Gustincich S."/>
            <person name="Harbers M."/>
            <person name="Hayashi Y."/>
            <person name="Hensch T.K."/>
            <person name="Hirokawa N."/>
            <person name="Hill D."/>
            <person name="Huminiecki L."/>
            <person name="Iacono M."/>
            <person name="Ikeo K."/>
            <person name="Iwama A."/>
            <person name="Ishikawa T."/>
            <person name="Jakt M."/>
            <person name="Kanapin A."/>
            <person name="Katoh M."/>
            <person name="Kawasawa Y."/>
            <person name="Kelso J."/>
            <person name="Kitamura H."/>
            <person name="Kitano H."/>
            <person name="Kollias G."/>
            <person name="Krishnan S.P."/>
            <person name="Kruger A."/>
            <person name="Kummerfeld S.K."/>
            <person name="Kurochkin I.V."/>
            <person name="Lareau L.F."/>
            <person name="Lazarevic D."/>
            <person name="Lipovich L."/>
            <person name="Liu J."/>
            <person name="Liuni S."/>
            <person name="McWilliam S."/>
            <person name="Madan Babu M."/>
            <person name="Madera M."/>
            <person name="Marchionni L."/>
            <person name="Matsuda H."/>
            <person name="Matsuzawa S."/>
            <person name="Miki H."/>
            <person name="Mignone F."/>
            <person name="Miyake S."/>
            <person name="Morris K."/>
            <person name="Mottagui-Tabar S."/>
            <person name="Mulder N."/>
            <person name="Nakano N."/>
            <person name="Nakauchi H."/>
            <person name="Ng P."/>
            <person name="Nilsson R."/>
            <person name="Nishiguchi S."/>
            <person name="Nishikawa S."/>
            <person name="Nori F."/>
            <person name="Ohara O."/>
            <person name="Okazaki Y."/>
            <person name="Orlando V."/>
            <person name="Pang K.C."/>
            <person name="Pavan W.J."/>
            <person name="Pavesi G."/>
            <person name="Pesole G."/>
            <person name="Petrovsky N."/>
            <person name="Piazza S."/>
            <person name="Reed J."/>
            <person name="Reid J.F."/>
            <person name="Ring B.Z."/>
            <person name="Ringwald M."/>
            <person name="Rost B."/>
            <person name="Ruan Y."/>
            <person name="Salzberg S.L."/>
            <person name="Sandelin A."/>
            <person name="Schneider C."/>
            <person name="Schoenbach C."/>
            <person name="Sekiguchi K."/>
            <person name="Semple C.A."/>
            <person name="Seno S."/>
            <person name="Sessa L."/>
            <person name="Sheng Y."/>
            <person name="Shibata Y."/>
            <person name="Shimada H."/>
            <person name="Shimada K."/>
            <person name="Silva D."/>
            <person name="Sinclair B."/>
            <person name="Sperling S."/>
            <person name="Stupka E."/>
            <person name="Sugiura K."/>
            <person name="Sultana R."/>
            <person name="Takenaka Y."/>
            <person name="Taki K."/>
            <person name="Tammoja K."/>
            <person name="Tan S.L."/>
            <person name="Tang S."/>
            <person name="Taylor M.S."/>
            <person name="Tegner J."/>
            <person name="Teichmann S.A."/>
            <person name="Ueda H.R."/>
            <person name="van Nimwegen E."/>
            <person name="Verardo R."/>
            <person name="Wei C.L."/>
            <person name="Yagi K."/>
            <person name="Yamanishi H."/>
            <person name="Zabarovsky E."/>
            <person name="Zhu S."/>
            <person name="Zimmer A."/>
            <person name="Hide W."/>
            <person name="Bult C."/>
            <person name="Grimmond S.M."/>
            <person name="Teasdale R.D."/>
            <person name="Liu E.T."/>
            <person name="Brusic V."/>
            <person name="Quackenbush J."/>
            <person name="Wahlestedt C."/>
            <person name="Mattick J.S."/>
            <person name="Hume D.A."/>
            <person name="Kai C."/>
            <person name="Sasaki D."/>
            <person name="Tomaru Y."/>
            <person name="Fukuda S."/>
            <person name="Kanamori-Katayama M."/>
            <person name="Suzuki M."/>
            <person name="Aoki J."/>
            <person name="Arakawa T."/>
            <person name="Iida J."/>
            <person name="Imamura K."/>
            <person name="Itoh M."/>
            <person name="Kato T."/>
            <person name="Kawaji H."/>
            <person name="Kawagashira N."/>
            <person name="Kawashima T."/>
            <person name="Kojima M."/>
            <person name="Kondo S."/>
            <person name="Konno H."/>
            <person name="Nakano K."/>
            <person name="Ninomiya N."/>
            <person name="Nishio T."/>
            <person name="Okada M."/>
            <person name="Plessy C."/>
            <person name="Shibata K."/>
            <person name="Shiraki T."/>
            <person name="Suzuki S."/>
            <person name="Tagami M."/>
            <person name="Waki K."/>
            <person name="Watahiki A."/>
            <person name="Okamura-Oho Y."/>
            <person name="Suzuki H."/>
            <person name="Kawai J."/>
            <person name="Hayashizaki Y."/>
        </authorList>
    </citation>
    <scope>NUCLEOTIDE SEQUENCE [LARGE SCALE MRNA] OF 472-1354</scope>
    <source>
        <strain>C57BL/6J</strain>
        <tissue>Heart</tissue>
        <tissue>Liver</tissue>
    </source>
</reference>
<reference key="4">
    <citation type="journal article" date="2005" name="J. Cell Biol.">
        <title>ROCK-I regulates closure of the eyelids and ventral body wall by inducing assembly of actomyosin bundles.</title>
        <authorList>
            <person name="Shimizu Y."/>
            <person name="Thumkeo D."/>
            <person name="Keel J."/>
            <person name="Ishizaki T."/>
            <person name="Oshima H."/>
            <person name="Oshima M."/>
            <person name="Noda Y."/>
            <person name="Matsumura F."/>
            <person name="Taketo M.M."/>
            <person name="Narumiya S."/>
        </authorList>
    </citation>
    <scope>FUNCTION</scope>
    <scope>DISRUPTION PHENOTYPE</scope>
</reference>
<reference key="5">
    <citation type="journal article" date="2006" name="J. Cell. Physiol.">
        <title>Integrin cytoplasmic domain-associated protein-1 (ICAP-1) interacts with the ROCK-I kinase at the plasma membrane.</title>
        <authorList>
            <person name="Stroeken P.J."/>
            <person name="Alvarez B."/>
            <person name="Van Rheenen J."/>
            <person name="Wijnands Y.M."/>
            <person name="Geerts D."/>
            <person name="Jalink K."/>
            <person name="Roos E."/>
        </authorList>
    </citation>
    <scope>INTERACTION WITH ITGB1BP1</scope>
    <scope>SUBCELLULAR LOCATION</scope>
</reference>
<reference key="6">
    <citation type="journal article" date="2008" name="J. Cell. Physiol.">
        <title>Integrin Cytoplasmic domain-Associated Protein-1 (ICAP-1) promotes migration of myoblasts and affects focal adhesions.</title>
        <authorList>
            <person name="Alvarez B."/>
            <person name="Stroeken P.J."/>
            <person name="Edel M.J."/>
            <person name="Roos E."/>
        </authorList>
    </citation>
    <scope>INTERACTION WITH ITGB1BP1</scope>
</reference>
<reference key="7">
    <citation type="journal article" date="2008" name="Sci. Signal.">
        <title>Identification of ROCK1 as an upstream activator of the JIP-3 to JNK signaling axis in response to UVB damage.</title>
        <authorList>
            <person name="Ongusaha P.P."/>
            <person name="Qi H.H."/>
            <person name="Raj L."/>
            <person name="Kim Y.B."/>
            <person name="Aaronson S.A."/>
            <person name="Davis R.J."/>
            <person name="Shi Y."/>
            <person name="Liao J.K."/>
            <person name="Lee S.W."/>
        </authorList>
    </citation>
    <scope>FUNCTION</scope>
</reference>
<reference key="8">
    <citation type="journal article" date="2009" name="Am. J. Physiol.">
        <title>Inhibition of Rho-dependent kinases ROCK I/II activates VEGF-driven retinal neovascularization and sprouting angiogenesis.</title>
        <authorList>
            <person name="Kroll J."/>
            <person name="Epting D."/>
            <person name="Kern K."/>
            <person name="Dietz C.T."/>
            <person name="Feng Y."/>
            <person name="Hammes H.P."/>
            <person name="Wieland T."/>
            <person name="Augustin H.G."/>
        </authorList>
    </citation>
    <scope>FUNCTION</scope>
</reference>
<reference key="9">
    <citation type="journal article" date="2010" name="Blood">
        <title>ROCK1 functions as a suppressor of inflammatory cell migration by regulating PTEN phosphorylation and stability.</title>
        <authorList>
            <person name="Vemula S."/>
            <person name="Shi J."/>
            <person name="Hanneman P."/>
            <person name="Wei L."/>
            <person name="Kapur R."/>
        </authorList>
    </citation>
    <scope>FUNCTION</scope>
    <scope>INTERACTION WITH PTEN</scope>
</reference>
<reference key="10">
    <citation type="journal article" date="2010" name="Cell">
        <title>A tissue-specific atlas of mouse protein phosphorylation and expression.</title>
        <authorList>
            <person name="Huttlin E.L."/>
            <person name="Jedrychowski M.P."/>
            <person name="Elias J.E."/>
            <person name="Goswami T."/>
            <person name="Rad R."/>
            <person name="Beausoleil S.A."/>
            <person name="Villen J."/>
            <person name="Haas W."/>
            <person name="Sowa M.E."/>
            <person name="Gygi S.P."/>
        </authorList>
    </citation>
    <scope>PHOSPHORYLATION [LARGE SCALE ANALYSIS] AT SER-1105 AND SER-1108</scope>
    <scope>IDENTIFICATION BY MASS SPECTROMETRY [LARGE SCALE ANALYSIS]</scope>
    <source>
        <tissue>Brain</tissue>
        <tissue>Brown adipose tissue</tissue>
        <tissue>Heart</tissue>
        <tissue>Kidney</tissue>
        <tissue>Liver</tissue>
        <tissue>Lung</tissue>
        <tissue>Pancreas</tissue>
        <tissue>Spleen</tissue>
        <tissue>Testis</tissue>
    </source>
</reference>
<reference key="11">
    <citation type="journal article" date="2011" name="J. Cell Biol.">
        <title>Osteoblast mineralization requires beta1 integrin/ICAP-1-dependent fibronectin deposition.</title>
        <authorList>
            <person name="Brunner M."/>
            <person name="Millon-Fremillon A."/>
            <person name="Chevalier G."/>
            <person name="Nakchbandi I.A."/>
            <person name="Mosher D."/>
            <person name="Block M.R."/>
            <person name="Albiges-Rizo C."/>
            <person name="Bouvard D."/>
        </authorList>
    </citation>
    <scope>FUNCTION</scope>
</reference>
<reference key="12">
    <citation type="journal article" date="2012" name="Mol. Biol. Cell">
        <title>Structure of Shroom domain 2 reveals a three-segmented coiled-coil required for dimerization, Rock binding, and apical constriction.</title>
        <authorList>
            <person name="Mohan S."/>
            <person name="Rizaldy R."/>
            <person name="Das D."/>
            <person name="Bauer R.J."/>
            <person name="Heroux A."/>
            <person name="Trakselis M.A."/>
            <person name="Hildebrand J.D."/>
            <person name="VanDemark A.P."/>
        </authorList>
    </citation>
    <scope>INTERACTION WITH SHROOM3</scope>
</reference>
<reference key="13">
    <citation type="journal article" date="2018" name="Sci. Rep.">
        <title>Regulation of cofilin phosphorylation in glomerular podocytes by testis specific kinase 1 (TESK1).</title>
        <authorList>
            <person name="Wang L."/>
            <person name="Buckley A.F."/>
            <person name="Spurney R.F."/>
        </authorList>
    </citation>
    <scope>FUNCTION</scope>
</reference>
<organism>
    <name type="scientific">Mus musculus</name>
    <name type="common">Mouse</name>
    <dbReference type="NCBI Taxonomy" id="10090"/>
    <lineage>
        <taxon>Eukaryota</taxon>
        <taxon>Metazoa</taxon>
        <taxon>Chordata</taxon>
        <taxon>Craniata</taxon>
        <taxon>Vertebrata</taxon>
        <taxon>Euteleostomi</taxon>
        <taxon>Mammalia</taxon>
        <taxon>Eutheria</taxon>
        <taxon>Euarchontoglires</taxon>
        <taxon>Glires</taxon>
        <taxon>Rodentia</taxon>
        <taxon>Myomorpha</taxon>
        <taxon>Muroidea</taxon>
        <taxon>Muridae</taxon>
        <taxon>Murinae</taxon>
        <taxon>Mus</taxon>
        <taxon>Mus</taxon>
    </lineage>
</organism>
<sequence length="1354" mass="158171">MSTGDSFETRFEKIDNLLRDPKSEVNSDCLLDGLDALVYDLDFPALRKNKNIDNFLSRYKDTINKIRDLRMKAEDYEVVKVIGRGAFGEVQLVRHKSTRKVYAMKLLSKFEMIKRSDSAFFWEERDIMAFANSPWVVQLFYAFQDDRYLYMVMEYMPGGDLVNLMSNYDVPEKWARFYTAEVVLALDAIHSMGFIHRDVKPDNMLLDKSGHLKLADFGTCMKMNKEGMVRCDTAVGTPDYISPEVLKSQGGDGYYGRECDWWSVGVFLYEMLVGDTPFYADSLVGTYSKIMNHKNSLTFPDDNDISKEAKNLICAFLTDREVRLGRNGVEEIKRHLFFKNDQWAWETLRDTVAPVVPDLSSDIDTSNFDDLEEDKGDEETFPIPKAFVGNQLPFVGFTYYSNRRYLPSANASENRSSSNVDKSLQESLQKTIYKLEEQLHNEMQLKDEMEQKCRTSNLKLDKIMKELDEEGNQRRNLESAVSQIEKEKMLLQHRINEYQRKVEQENEKRRNIENEVSTLKDQLEDLRKASQTSQLANEKLTQLQKQLEEANDLLRTESDTAVRLRKSHTEMSKSISQLESLNRELQERNRILENSKSQADKDYYQLQAVLEAERRDRGHDSEMIGDLQARITSLQEEVKHLKHNLERVEGERKEAQDMLNHSEKEKNNLEIDLNYKLKSIQQRLEQEVNEHKVTKARLTDKHQSIEEAKSVAMCEMEKKLKEEREAREKAENRVVETEKQCSMLDVDLKQSQQKLEHLTENKERMEDEVKNLALQLEQESNKRLLLQNELKTQAFEADNLKGLEKQMKQEINTLLEAKRLLEFELAQLTKQYRGNEGQMRELQDQLEAEQYFSTLYKTQVKELKEEIEEKNRENLRKIQELQSEKETLSTQLDLAETKAESEQLARGILEEQYFELTQESKKAASRNRQEITDKDHTVSRLEETNSVLTKDIEMLRKENEELNERMRTAEEEYKLKKEEEINNLKAAFEKNISTERTLKTQAVNKLAEIMNRKDFKIDRKKANTQDLRKKEKENRKLQLELNQEREKFNQMVVKHQKELNDMQAQLVEECTHRNELQMQLASKESDIEQLRAKLLDLSDSTSVASFPSADETDGNLPESRIEGWLSVPNRGNIKRYGWKKQYVVVSSKKILFYNDEQDKEQSSPSMVLDIDKLFHVRPVTQGDVYRAETEEIPKIFQILYANEGECRKDIEVEPVQQGEKTNFQNHKGHEFIPTLYHFPANCEACAKPLWHVFKPPPALECRRCHVKCHRDHLDKKEDLISPCKVSYDVTSARDMLLLACSQDEQKKWVTHLVKKIPKNPPSGFVRASPRTLSTRSTANQSFRKVVKNTSGKTS</sequence>
<keyword id="KW-0007">Acetylation</keyword>
<keyword id="KW-0025">Alternative splicing</keyword>
<keyword id="KW-0053">Apoptosis</keyword>
<keyword id="KW-0067">ATP-binding</keyword>
<keyword id="KW-1003">Cell membrane</keyword>
<keyword id="KW-0966">Cell projection</keyword>
<keyword id="KW-0175">Coiled coil</keyword>
<keyword id="KW-0963">Cytoplasm</keyword>
<keyword id="KW-0206">Cytoskeleton</keyword>
<keyword id="KW-0333">Golgi apparatus</keyword>
<keyword id="KW-0418">Kinase</keyword>
<keyword id="KW-0460">Magnesium</keyword>
<keyword id="KW-0472">Membrane</keyword>
<keyword id="KW-0479">Metal-binding</keyword>
<keyword id="KW-0547">Nucleotide-binding</keyword>
<keyword id="KW-0597">Phosphoprotein</keyword>
<keyword id="KW-1185">Reference proteome</keyword>
<keyword id="KW-0723">Serine/threonine-protein kinase</keyword>
<keyword id="KW-0808">Transferase</keyword>
<keyword id="KW-0862">Zinc</keyword>
<keyword id="KW-0863">Zinc-finger</keyword>
<gene>
    <name type="primary">Rock1</name>
</gene>
<accession>P70335</accession>
<accession>Q8C3G4</accession>
<accession>Q8C7H0</accession>
<name>ROCK1_MOUSE</name>
<protein>
    <recommendedName>
        <fullName>Rho-associated protein kinase 1</fullName>
        <ecNumber>2.7.11.1</ecNumber>
    </recommendedName>
    <alternativeName>
        <fullName>Rho-associated, coiled-coil-containing protein kinase 1</fullName>
    </alternativeName>
    <alternativeName>
        <fullName>Rho-associated, coiled-coil-containing protein kinase I</fullName>
        <shortName>ROCK-I</shortName>
    </alternativeName>
    <alternativeName>
        <fullName>p160 ROCK-1</fullName>
        <shortName>p160ROCK</shortName>
    </alternativeName>
</protein>
<evidence type="ECO:0000250" key="1"/>
<evidence type="ECO:0000250" key="2">
    <source>
        <dbReference type="UniProtKB" id="Q13464"/>
    </source>
</evidence>
<evidence type="ECO:0000250" key="3">
    <source>
        <dbReference type="UniProtKB" id="Q8MIT6"/>
    </source>
</evidence>
<evidence type="ECO:0000255" key="4"/>
<evidence type="ECO:0000255" key="5">
    <source>
        <dbReference type="PROSITE-ProRule" id="PRU00145"/>
    </source>
</evidence>
<evidence type="ECO:0000255" key="6">
    <source>
        <dbReference type="PROSITE-ProRule" id="PRU00159"/>
    </source>
</evidence>
<evidence type="ECO:0000255" key="7">
    <source>
        <dbReference type="PROSITE-ProRule" id="PRU00226"/>
    </source>
</evidence>
<evidence type="ECO:0000255" key="8">
    <source>
        <dbReference type="PROSITE-ProRule" id="PRU00618"/>
    </source>
</evidence>
<evidence type="ECO:0000255" key="9">
    <source>
        <dbReference type="PROSITE-ProRule" id="PRU01206"/>
    </source>
</evidence>
<evidence type="ECO:0000255" key="10">
    <source>
        <dbReference type="PROSITE-ProRule" id="PRU01207"/>
    </source>
</evidence>
<evidence type="ECO:0000255" key="11">
    <source>
        <dbReference type="PROSITE-ProRule" id="PRU10027"/>
    </source>
</evidence>
<evidence type="ECO:0000256" key="12">
    <source>
        <dbReference type="SAM" id="MobiDB-lite"/>
    </source>
</evidence>
<evidence type="ECO:0000269" key="13">
    <source>
    </source>
</evidence>
<evidence type="ECO:0000269" key="14">
    <source>
    </source>
</evidence>
<evidence type="ECO:0000269" key="15">
    <source>
    </source>
</evidence>
<evidence type="ECO:0000269" key="16">
    <source>
    </source>
</evidence>
<evidence type="ECO:0000269" key="17">
    <source>
    </source>
</evidence>
<evidence type="ECO:0000269" key="18">
    <source>
    </source>
</evidence>
<evidence type="ECO:0000269" key="19">
    <source>
    </source>
</evidence>
<evidence type="ECO:0000269" key="20">
    <source>
    </source>
</evidence>
<evidence type="ECO:0000269" key="21">
    <source>
    </source>
</evidence>
<evidence type="ECO:0000269" key="22">
    <source>
    </source>
</evidence>
<evidence type="ECO:0000303" key="23">
    <source>
    </source>
</evidence>
<evidence type="ECO:0000305" key="24"/>
<evidence type="ECO:0007744" key="25">
    <source>
    </source>
</evidence>
<feature type="initiator methionine" description="Removed" evidence="2">
    <location>
        <position position="1"/>
    </location>
</feature>
<feature type="chain" id="PRO_0000086620" description="Rho-associated protein kinase 1">
    <location>
        <begin position="2"/>
        <end position="1354"/>
    </location>
</feature>
<feature type="domain" description="Protein kinase" evidence="6">
    <location>
        <begin position="76"/>
        <end position="338"/>
    </location>
</feature>
<feature type="domain" description="AGC-kinase C-terminal" evidence="8">
    <location>
        <begin position="341"/>
        <end position="409"/>
    </location>
</feature>
<feature type="domain" description="REM-1" evidence="10">
    <location>
        <begin position="479"/>
        <end position="556"/>
    </location>
</feature>
<feature type="domain" description="RhoBD" evidence="9">
    <location>
        <begin position="949"/>
        <end position="1015"/>
    </location>
</feature>
<feature type="domain" description="PH" evidence="5">
    <location>
        <begin position="1118"/>
        <end position="1317"/>
    </location>
</feature>
<feature type="zinc finger region" description="Phorbol-ester/DAG-type" evidence="7">
    <location>
        <begin position="1228"/>
        <end position="1283"/>
    </location>
</feature>
<feature type="region of interest" description="Interaction with FHOD1" evidence="1">
    <location>
        <begin position="368"/>
        <end position="727"/>
    </location>
</feature>
<feature type="region of interest" description="SHROOM3 binding" evidence="20">
    <location>
        <begin position="707"/>
        <end position="946"/>
    </location>
</feature>
<feature type="region of interest" description="RHOA binding" evidence="1">
    <location>
        <begin position="998"/>
        <end position="1010"/>
    </location>
</feature>
<feature type="region of interest" description="Auto-inhibitory" evidence="1">
    <location>
        <begin position="1115"/>
        <end position="1354"/>
    </location>
</feature>
<feature type="region of interest" description="Disordered" evidence="12">
    <location>
        <begin position="1333"/>
        <end position="1354"/>
    </location>
</feature>
<feature type="coiled-coil region" evidence="4">
    <location>
        <begin position="422"/>
        <end position="692"/>
    </location>
</feature>
<feature type="coiled-coil region" evidence="4">
    <location>
        <begin position="1011"/>
        <end position="1102"/>
    </location>
</feature>
<feature type="active site" description="Proton acceptor" evidence="6 11">
    <location>
        <position position="198"/>
    </location>
</feature>
<feature type="binding site" evidence="6">
    <location>
        <begin position="82"/>
        <end position="90"/>
    </location>
    <ligand>
        <name>ATP</name>
        <dbReference type="ChEBI" id="CHEBI:30616"/>
    </ligand>
</feature>
<feature type="binding site" evidence="6">
    <location>
        <position position="105"/>
    </location>
    <ligand>
        <name>ATP</name>
        <dbReference type="ChEBI" id="CHEBI:30616"/>
    </ligand>
</feature>
<feature type="site" description="Cleavage; by caspase-3" evidence="1">
    <location>
        <begin position="1113"/>
        <end position="1114"/>
    </location>
</feature>
<feature type="modified residue" description="N-acetylserine" evidence="2">
    <location>
        <position position="2"/>
    </location>
</feature>
<feature type="modified residue" description="Phosphoserine" evidence="25">
    <location>
        <position position="1105"/>
    </location>
</feature>
<feature type="modified residue" description="Phosphoserine" evidence="25">
    <location>
        <position position="1108"/>
    </location>
</feature>
<feature type="modified residue" description="Phosphoserine" evidence="2">
    <location>
        <position position="1328"/>
    </location>
</feature>
<feature type="splice variant" id="VSP_010448" description="In isoform 2." evidence="23">
    <location>
        <position position="425"/>
    </location>
</feature>